<name>PRVB3_MERSE</name>
<comment type="function">
    <text evidence="2 3">In muscle, parvalbumin is thought to be involved in relaxation after contraction. It binds two calcium ions (By similarity).</text>
</comment>
<comment type="miscellaneous">
    <text evidence="2 7">Is regarded as an important allergen.</text>
</comment>
<comment type="miscellaneous">
    <text evidence="7">On the 2D-gel the determined pI of this protein is: 3.92, its MW is: 11.37 kDa.</text>
</comment>
<comment type="similarity">
    <text evidence="4">Belongs to the parvalbumin family.</text>
</comment>
<proteinExistence type="evidence at protein level"/>
<sequence length="58" mass="6248">AFAGVLADADIKAALAGCAAAESFNYKTFFKFFAIIDQDHSGFIEEEELKALSDAETK</sequence>
<keyword id="KW-0007">Acetylation</keyword>
<keyword id="KW-0020">Allergen</keyword>
<keyword id="KW-0106">Calcium</keyword>
<keyword id="KW-0903">Direct protein sequencing</keyword>
<keyword id="KW-0479">Metal-binding</keyword>
<keyword id="KW-0514">Muscle protein</keyword>
<protein>
    <recommendedName>
        <fullName evidence="8">Parvalbumin beta 3</fullName>
    </recommendedName>
</protein>
<dbReference type="SMR" id="P86777"/>
<dbReference type="iPTMnet" id="P86777"/>
<dbReference type="GO" id="GO:0005737">
    <property type="term" value="C:cytoplasm"/>
    <property type="evidence" value="ECO:0007669"/>
    <property type="project" value="TreeGrafter"/>
</dbReference>
<dbReference type="GO" id="GO:0005509">
    <property type="term" value="F:calcium ion binding"/>
    <property type="evidence" value="ECO:0007669"/>
    <property type="project" value="InterPro"/>
</dbReference>
<dbReference type="Gene3D" id="1.10.238.10">
    <property type="entry name" value="EF-hand"/>
    <property type="match status" value="1"/>
</dbReference>
<dbReference type="InterPro" id="IPR011992">
    <property type="entry name" value="EF-hand-dom_pair"/>
</dbReference>
<dbReference type="InterPro" id="IPR018247">
    <property type="entry name" value="EF_Hand_1_Ca_BS"/>
</dbReference>
<dbReference type="InterPro" id="IPR008080">
    <property type="entry name" value="Parvalbumin"/>
</dbReference>
<dbReference type="PANTHER" id="PTHR11653:SF12">
    <property type="entry name" value="PARVALBUMIN"/>
    <property type="match status" value="1"/>
</dbReference>
<dbReference type="PANTHER" id="PTHR11653">
    <property type="entry name" value="PARVALBUMIN ALPHA"/>
    <property type="match status" value="1"/>
</dbReference>
<dbReference type="SUPFAM" id="SSF47473">
    <property type="entry name" value="EF-hand"/>
    <property type="match status" value="1"/>
</dbReference>
<dbReference type="PROSITE" id="PS00018">
    <property type="entry name" value="EF_HAND_1"/>
    <property type="match status" value="1"/>
</dbReference>
<evidence type="ECO:0000250" key="1">
    <source>
        <dbReference type="UniProtKB" id="P02621"/>
    </source>
</evidence>
<evidence type="ECO:0000250" key="2">
    <source>
        <dbReference type="UniProtKB" id="P02622"/>
    </source>
</evidence>
<evidence type="ECO:0000250" key="3">
    <source>
        <dbReference type="UniProtKB" id="P02624"/>
    </source>
</evidence>
<evidence type="ECO:0000255" key="4"/>
<evidence type="ECO:0000255" key="5">
    <source>
        <dbReference type="PROSITE-ProRule" id="PRU00448"/>
    </source>
</evidence>
<evidence type="ECO:0000255" key="6">
    <source>
        <dbReference type="PROSITE-ProRule" id="PRU10142"/>
    </source>
</evidence>
<evidence type="ECO:0000269" key="7">
    <source>
    </source>
</evidence>
<evidence type="ECO:0000303" key="8">
    <source>
    </source>
</evidence>
<evidence type="ECO:0000305" key="9"/>
<feature type="chain" id="PRO_0000399439" description="Parvalbumin beta 3">
    <location>
        <begin position="1"/>
        <end position="58" status="greater than"/>
    </location>
</feature>
<feature type="domain" description="EF-hand" evidence="5">
    <location>
        <begin position="24"/>
        <end position="58"/>
    </location>
</feature>
<feature type="binding site" evidence="6">
    <location>
        <position position="37"/>
    </location>
    <ligand>
        <name>Ca(2+)</name>
        <dbReference type="ChEBI" id="CHEBI:29108"/>
    </ligand>
</feature>
<feature type="binding site" evidence="6">
    <location>
        <position position="39"/>
    </location>
    <ligand>
        <name>Ca(2+)</name>
        <dbReference type="ChEBI" id="CHEBI:29108"/>
    </ligand>
</feature>
<feature type="binding site" evidence="6">
    <location>
        <position position="41"/>
    </location>
    <ligand>
        <name>Ca(2+)</name>
        <dbReference type="ChEBI" id="CHEBI:29108"/>
    </ligand>
</feature>
<feature type="binding site" evidence="6">
    <location>
        <position position="43"/>
    </location>
    <ligand>
        <name>Ca(2+)</name>
        <dbReference type="ChEBI" id="CHEBI:29108"/>
    </ligand>
</feature>
<feature type="binding site" evidence="1">
    <location>
        <position position="45"/>
    </location>
    <ligand>
        <name>Ca(2+)</name>
        <dbReference type="ChEBI" id="CHEBI:29108"/>
        <label>1</label>
    </ligand>
</feature>
<feature type="binding site" evidence="6">
    <location>
        <position position="48"/>
    </location>
    <ligand>
        <name>Ca(2+)</name>
        <dbReference type="ChEBI" id="CHEBI:29108"/>
    </ligand>
</feature>
<feature type="modified residue" description="N-acetylalanine" evidence="7">
    <location>
        <position position="1"/>
    </location>
</feature>
<feature type="unsure residue" description="L or I" evidence="7">
    <location>
        <position position="6"/>
    </location>
</feature>
<feature type="unsure residue" description="I or L" evidence="7">
    <location>
        <position position="11"/>
    </location>
</feature>
<feature type="unsure residue" description="K or Q" evidence="7">
    <location>
        <position position="12"/>
    </location>
</feature>
<feature type="unsure residue" description="L or I" evidence="7">
    <location>
        <position position="15"/>
    </location>
</feature>
<feature type="unsure residue" description="K or Q" evidence="7">
    <location>
        <position position="27"/>
    </location>
</feature>
<feature type="unsure residue" description="K or Q" evidence="7">
    <location>
        <position position="31"/>
    </location>
</feature>
<feature type="unsure residue" description="I or L" evidence="7">
    <location>
        <position position="35"/>
    </location>
</feature>
<feature type="unsure residue" description="I or L" evidence="7">
    <location>
        <position position="36"/>
    </location>
</feature>
<feature type="unsure residue" description="Q or K" evidence="7">
    <location>
        <position position="38"/>
    </location>
</feature>
<feature type="unsure residue" description="I or L" evidence="7">
    <location>
        <position position="44"/>
    </location>
</feature>
<feature type="unsure residue" description="L or I" evidence="7">
    <location>
        <position position="49"/>
    </location>
</feature>
<feature type="unsure residue" description="K or Q" evidence="7">
    <location>
        <position position="50"/>
    </location>
</feature>
<feature type="unsure residue" description="L or I" evidence="7">
    <location>
        <position position="52"/>
    </location>
</feature>
<feature type="unsure residue" description="K or Q" evidence="7">
    <location>
        <position position="58"/>
    </location>
</feature>
<feature type="non-consecutive residues" evidence="8">
    <location>
        <begin position="31"/>
        <end position="32"/>
    </location>
</feature>
<feature type="non-consecutive residues" evidence="8">
    <location>
        <begin position="50"/>
        <end position="51"/>
    </location>
</feature>
<feature type="non-terminal residue" evidence="8">
    <location>
        <position position="58"/>
    </location>
</feature>
<accession>P86777</accession>
<organism>
    <name type="scientific">Merluccius senegalensis</name>
    <name type="common">Senegalese hake</name>
    <dbReference type="NCBI Taxonomy" id="89953"/>
    <lineage>
        <taxon>Eukaryota</taxon>
        <taxon>Metazoa</taxon>
        <taxon>Chordata</taxon>
        <taxon>Craniata</taxon>
        <taxon>Vertebrata</taxon>
        <taxon>Euteleostomi</taxon>
        <taxon>Actinopterygii</taxon>
        <taxon>Neopterygii</taxon>
        <taxon>Teleostei</taxon>
        <taxon>Neoteleostei</taxon>
        <taxon>Acanthomorphata</taxon>
        <taxon>Zeiogadaria</taxon>
        <taxon>Gadariae</taxon>
        <taxon>Gadiformes</taxon>
        <taxon>Gadoidei</taxon>
        <taxon>Merlucciidae</taxon>
        <taxon>Merluccius</taxon>
    </lineage>
</organism>
<reference evidence="9" key="1">
    <citation type="journal article" date="2010" name="J. Proteome Res.">
        <title>Extensive de novo sequencing of new parvalbumin isoforms using a novel combination of bottom-up proteomics, accurate molecular mass measurement by FTICR-MS, and selected MS/MS ion monitoring.</title>
        <authorList>
            <person name="Carrera M."/>
            <person name="Canas B."/>
            <person name="Vazquez J."/>
            <person name="Gallardo J.M."/>
        </authorList>
    </citation>
    <scope>PROTEIN SEQUENCE</scope>
    <scope>ACETYLATION AT ALA-1</scope>
    <source>
        <tissue evidence="7">Muscle</tissue>
    </source>
</reference>